<feature type="chain" id="PRO_0000156136" description="Diphthine methyl ester synthase">
    <location>
        <begin position="1"/>
        <end position="298"/>
    </location>
</feature>
<feature type="binding site" evidence="1">
    <location>
        <position position="9"/>
    </location>
    <ligand>
        <name>S-adenosyl-L-methionine</name>
        <dbReference type="ChEBI" id="CHEBI:59789"/>
    </ligand>
</feature>
<feature type="binding site" evidence="1">
    <location>
        <position position="85"/>
    </location>
    <ligand>
        <name>S-adenosyl-L-methionine</name>
        <dbReference type="ChEBI" id="CHEBI:59789"/>
    </ligand>
</feature>
<feature type="binding site" evidence="1">
    <location>
        <position position="88"/>
    </location>
    <ligand>
        <name>S-adenosyl-L-methionine</name>
        <dbReference type="ChEBI" id="CHEBI:59789"/>
    </ligand>
</feature>
<feature type="binding site" evidence="1">
    <location>
        <begin position="113"/>
        <end position="114"/>
    </location>
    <ligand>
        <name>S-adenosyl-L-methionine</name>
        <dbReference type="ChEBI" id="CHEBI:59789"/>
    </ligand>
</feature>
<feature type="binding site" evidence="1">
    <location>
        <position position="164"/>
    </location>
    <ligand>
        <name>S-adenosyl-L-methionine</name>
        <dbReference type="ChEBI" id="CHEBI:59789"/>
    </ligand>
</feature>
<feature type="binding site" evidence="1">
    <location>
        <position position="222"/>
    </location>
    <ligand>
        <name>S-adenosyl-L-methionine</name>
        <dbReference type="ChEBI" id="CHEBI:59789"/>
    </ligand>
</feature>
<feature type="binding site" evidence="1">
    <location>
        <position position="247"/>
    </location>
    <ligand>
        <name>S-adenosyl-L-methionine</name>
        <dbReference type="ChEBI" id="CHEBI:59789"/>
    </ligand>
</feature>
<name>DPH5_EREGS</name>
<gene>
    <name type="primary">DPH5</name>
    <name type="ordered locus">AFR123W</name>
</gene>
<reference key="1">
    <citation type="journal article" date="2004" name="Science">
        <title>The Ashbya gossypii genome as a tool for mapping the ancient Saccharomyces cerevisiae genome.</title>
        <authorList>
            <person name="Dietrich F.S."/>
            <person name="Voegeli S."/>
            <person name="Brachat S."/>
            <person name="Lerch A."/>
            <person name="Gates K."/>
            <person name="Steiner S."/>
            <person name="Mohr C."/>
            <person name="Poehlmann R."/>
            <person name="Luedi P."/>
            <person name="Choi S."/>
            <person name="Wing R.A."/>
            <person name="Flavier A."/>
            <person name="Gaffney T.D."/>
            <person name="Philippsen P."/>
        </authorList>
    </citation>
    <scope>NUCLEOTIDE SEQUENCE [LARGE SCALE GENOMIC DNA]</scope>
    <source>
        <strain>ATCC 10895 / CBS 109.51 / FGSC 9923 / NRRL Y-1056</strain>
    </source>
</reference>
<reference key="2">
    <citation type="journal article" date="2013" name="G3 (Bethesda)">
        <title>Genomes of Ashbya fungi isolated from insects reveal four mating-type loci, numerous translocations, lack of transposons, and distinct gene duplications.</title>
        <authorList>
            <person name="Dietrich F.S."/>
            <person name="Voegeli S."/>
            <person name="Kuo S."/>
            <person name="Philippsen P."/>
        </authorList>
    </citation>
    <scope>GENOME REANNOTATION</scope>
    <source>
        <strain>ATCC 10895 / CBS 109.51 / FGSC 9923 / NRRL Y-1056</strain>
    </source>
</reference>
<proteinExistence type="inferred from homology"/>
<protein>
    <recommendedName>
        <fullName>Diphthine methyl ester synthase</fullName>
        <ecNumber>2.1.1.314</ecNumber>
    </recommendedName>
    <alternativeName>
        <fullName>Diphthamide biosynthesis methyltransferase</fullName>
    </alternativeName>
</protein>
<dbReference type="EC" id="2.1.1.314"/>
<dbReference type="EMBL" id="AE016819">
    <property type="protein sequence ID" value="AAS53494.1"/>
    <property type="molecule type" value="Genomic_DNA"/>
</dbReference>
<dbReference type="RefSeq" id="NP_985670.1">
    <property type="nucleotide sequence ID" value="NM_211024.1"/>
</dbReference>
<dbReference type="SMR" id="Q754E7"/>
<dbReference type="FunCoup" id="Q754E7">
    <property type="interactions" value="977"/>
</dbReference>
<dbReference type="STRING" id="284811.Q754E7"/>
<dbReference type="EnsemblFungi" id="AAS53494">
    <property type="protein sequence ID" value="AAS53494"/>
    <property type="gene ID" value="AGOS_AFR123W"/>
</dbReference>
<dbReference type="GeneID" id="4621917"/>
<dbReference type="KEGG" id="ago:AGOS_AFR123W"/>
<dbReference type="eggNOG" id="KOG3123">
    <property type="taxonomic scope" value="Eukaryota"/>
</dbReference>
<dbReference type="HOGENOM" id="CLU_066040_1_0_1"/>
<dbReference type="InParanoid" id="Q754E7"/>
<dbReference type="OMA" id="HNASIMS"/>
<dbReference type="OrthoDB" id="2516at2759"/>
<dbReference type="UniPathway" id="UPA00559"/>
<dbReference type="Proteomes" id="UP000000591">
    <property type="component" value="Chromosome VI"/>
</dbReference>
<dbReference type="GO" id="GO:0005737">
    <property type="term" value="C:cytoplasm"/>
    <property type="evidence" value="ECO:0007669"/>
    <property type="project" value="UniProtKB-SubCell"/>
</dbReference>
<dbReference type="GO" id="GO:0141133">
    <property type="term" value="F:diphthine methyl ester synthase activity"/>
    <property type="evidence" value="ECO:0007669"/>
    <property type="project" value="UniProtKB-EC"/>
</dbReference>
<dbReference type="GO" id="GO:0032259">
    <property type="term" value="P:methylation"/>
    <property type="evidence" value="ECO:0007669"/>
    <property type="project" value="UniProtKB-KW"/>
</dbReference>
<dbReference type="GO" id="GO:0017183">
    <property type="term" value="P:protein histidyl modification to diphthamide"/>
    <property type="evidence" value="ECO:0000250"/>
    <property type="project" value="UniProtKB"/>
</dbReference>
<dbReference type="CDD" id="cd11647">
    <property type="entry name" value="DHP5_DphB"/>
    <property type="match status" value="1"/>
</dbReference>
<dbReference type="FunFam" id="3.30.950.10:FF:000004">
    <property type="entry name" value="Diphthine synthase putative"/>
    <property type="match status" value="1"/>
</dbReference>
<dbReference type="FunFam" id="3.40.1010.10:FF:000004">
    <property type="entry name" value="Putative diphthine synthase"/>
    <property type="match status" value="1"/>
</dbReference>
<dbReference type="Gene3D" id="3.40.1010.10">
    <property type="entry name" value="Cobalt-precorrin-4 Transmethylase, Domain 1"/>
    <property type="match status" value="1"/>
</dbReference>
<dbReference type="Gene3D" id="3.30.950.10">
    <property type="entry name" value="Methyltransferase, Cobalt-precorrin-4 Transmethylase, Domain 2"/>
    <property type="match status" value="1"/>
</dbReference>
<dbReference type="HAMAP" id="MF_01084">
    <property type="entry name" value="Diphthine_synth"/>
    <property type="match status" value="1"/>
</dbReference>
<dbReference type="InterPro" id="IPR000878">
    <property type="entry name" value="4pyrrol_Mease"/>
</dbReference>
<dbReference type="InterPro" id="IPR035996">
    <property type="entry name" value="4pyrrol_Methylase_sf"/>
</dbReference>
<dbReference type="InterPro" id="IPR014777">
    <property type="entry name" value="4pyrrole_Mease_sub1"/>
</dbReference>
<dbReference type="InterPro" id="IPR014776">
    <property type="entry name" value="4pyrrole_Mease_sub2"/>
</dbReference>
<dbReference type="InterPro" id="IPR004551">
    <property type="entry name" value="Dphthn_synthase"/>
</dbReference>
<dbReference type="NCBIfam" id="TIGR00522">
    <property type="entry name" value="dph5"/>
    <property type="match status" value="1"/>
</dbReference>
<dbReference type="PANTHER" id="PTHR10882:SF0">
    <property type="entry name" value="DIPHTHINE METHYL ESTER SYNTHASE"/>
    <property type="match status" value="1"/>
</dbReference>
<dbReference type="PANTHER" id="PTHR10882">
    <property type="entry name" value="DIPHTHINE SYNTHASE"/>
    <property type="match status" value="1"/>
</dbReference>
<dbReference type="Pfam" id="PF00590">
    <property type="entry name" value="TP_methylase"/>
    <property type="match status" value="1"/>
</dbReference>
<dbReference type="PIRSF" id="PIRSF036432">
    <property type="entry name" value="Diphthine_synth"/>
    <property type="match status" value="1"/>
</dbReference>
<dbReference type="SUPFAM" id="SSF53790">
    <property type="entry name" value="Tetrapyrrole methylase"/>
    <property type="match status" value="1"/>
</dbReference>
<keyword id="KW-0963">Cytoplasm</keyword>
<keyword id="KW-0489">Methyltransferase</keyword>
<keyword id="KW-1185">Reference proteome</keyword>
<keyword id="KW-0949">S-adenosyl-L-methionine</keyword>
<keyword id="KW-0808">Transferase</keyword>
<sequence>MLFLVGLGLSSHEDITVRGLNAVKRCARVYLEHYTSILMTASKEELEGFYGKPVVLADREMVESGCEEILRDADKEDVAFLVVGDPFGATTHTDLVLRAKKQGIVVEVVHNASVMNAVGSCGLQLYNFGQTISMVFFTDSWRPDSWYDKVLENRRIGLHTLVLLDIKVKEQSPENLARGRLIFEPPRYMSISQCCEQLLEVEEKRGQQAYTPDTPCVAISRLGAPTQHMKSGSIHELAEYDAGEPLHSLVILGRQCHELELEYLLEFSEDQERFKDQVHRDQEFFKPAPWVPPPEDED</sequence>
<accession>Q754E7</accession>
<comment type="function">
    <text evidence="2">S-adenosyl-L-methionine-dependent methyltransferase that catalyzes four methylations of the modified target histidine residue in translation elongation factor 2 (EF-2), to form an intermediate called diphthine methyl ester. The four successive methylation reactions represent the second step of diphthamide biosynthesis.</text>
</comment>
<comment type="catalytic activity">
    <reaction evidence="2">
        <text>2-[(3S)-amino-3-carboxypropyl]-L-histidyl-[translation elongation factor 2] + 4 S-adenosyl-L-methionine = diphthine methyl ester-[translation elongation factor 2] + 4 S-adenosyl-L-homocysteine + 3 H(+)</text>
        <dbReference type="Rhea" id="RHEA:42652"/>
        <dbReference type="Rhea" id="RHEA-COMP:9749"/>
        <dbReference type="Rhea" id="RHEA-COMP:10173"/>
        <dbReference type="ChEBI" id="CHEBI:15378"/>
        <dbReference type="ChEBI" id="CHEBI:57856"/>
        <dbReference type="ChEBI" id="CHEBI:59789"/>
        <dbReference type="ChEBI" id="CHEBI:73995"/>
        <dbReference type="ChEBI" id="CHEBI:79005"/>
        <dbReference type="EC" id="2.1.1.314"/>
    </reaction>
</comment>
<comment type="pathway">
    <text>Protein modification; peptidyl-diphthamide biosynthesis.</text>
</comment>
<comment type="subcellular location">
    <subcellularLocation>
        <location evidence="1">Cytoplasm</location>
    </subcellularLocation>
</comment>
<comment type="similarity">
    <text evidence="3">Belongs to the diphthine synthase family.</text>
</comment>
<evidence type="ECO:0000250" key="1"/>
<evidence type="ECO:0000250" key="2">
    <source>
        <dbReference type="UniProtKB" id="P32469"/>
    </source>
</evidence>
<evidence type="ECO:0000305" key="3"/>
<organism>
    <name type="scientific">Eremothecium gossypii (strain ATCC 10895 / CBS 109.51 / FGSC 9923 / NRRL Y-1056)</name>
    <name type="common">Yeast</name>
    <name type="synonym">Ashbya gossypii</name>
    <dbReference type="NCBI Taxonomy" id="284811"/>
    <lineage>
        <taxon>Eukaryota</taxon>
        <taxon>Fungi</taxon>
        <taxon>Dikarya</taxon>
        <taxon>Ascomycota</taxon>
        <taxon>Saccharomycotina</taxon>
        <taxon>Saccharomycetes</taxon>
        <taxon>Saccharomycetales</taxon>
        <taxon>Saccharomycetaceae</taxon>
        <taxon>Eremothecium</taxon>
    </lineage>
</organism>